<gene>
    <name evidence="1" type="primary">katG</name>
    <name type="ordered locus">NFA_29500</name>
</gene>
<accession>Q5YVJ4</accession>
<feature type="chain" id="PRO_0000354851" description="Catalase-peroxidase">
    <location>
        <begin position="1"/>
        <end position="739"/>
    </location>
</feature>
<feature type="region of interest" description="Disordered" evidence="2">
    <location>
        <begin position="1"/>
        <end position="33"/>
    </location>
</feature>
<feature type="region of interest" description="Disordered" evidence="2">
    <location>
        <begin position="113"/>
        <end position="134"/>
    </location>
</feature>
<feature type="active site" description="Proton acceptor" evidence="1">
    <location>
        <position position="107"/>
    </location>
</feature>
<feature type="binding site" description="axial binding residue" evidence="1">
    <location>
        <position position="270"/>
    </location>
    <ligand>
        <name>heme b</name>
        <dbReference type="ChEBI" id="CHEBI:60344"/>
    </ligand>
    <ligandPart>
        <name>Fe</name>
        <dbReference type="ChEBI" id="CHEBI:18248"/>
    </ligandPart>
</feature>
<feature type="site" description="Transition state stabilizer" evidence="1">
    <location>
        <position position="103"/>
    </location>
</feature>
<feature type="cross-link" description="Tryptophyl-tyrosyl-methioninium (Trp-Tyr) (with M-255)" evidence="1">
    <location>
        <begin position="106"/>
        <end position="229"/>
    </location>
</feature>
<feature type="cross-link" description="Tryptophyl-tyrosyl-methioninium (Tyr-Met) (with W-106)" evidence="1">
    <location>
        <begin position="229"/>
        <end position="255"/>
    </location>
</feature>
<comment type="function">
    <text evidence="1">Bifunctional enzyme with both catalase and broad-spectrum peroxidase activity.</text>
</comment>
<comment type="catalytic activity">
    <reaction evidence="1">
        <text>H2O2 + AH2 = A + 2 H2O</text>
        <dbReference type="Rhea" id="RHEA:30275"/>
        <dbReference type="ChEBI" id="CHEBI:13193"/>
        <dbReference type="ChEBI" id="CHEBI:15377"/>
        <dbReference type="ChEBI" id="CHEBI:16240"/>
        <dbReference type="ChEBI" id="CHEBI:17499"/>
        <dbReference type="EC" id="1.11.1.21"/>
    </reaction>
</comment>
<comment type="catalytic activity">
    <reaction evidence="1">
        <text>2 H2O2 = O2 + 2 H2O</text>
        <dbReference type="Rhea" id="RHEA:20309"/>
        <dbReference type="ChEBI" id="CHEBI:15377"/>
        <dbReference type="ChEBI" id="CHEBI:15379"/>
        <dbReference type="ChEBI" id="CHEBI:16240"/>
        <dbReference type="EC" id="1.11.1.21"/>
    </reaction>
</comment>
<comment type="cofactor">
    <cofactor evidence="1">
        <name>heme b</name>
        <dbReference type="ChEBI" id="CHEBI:60344"/>
    </cofactor>
    <text evidence="1">Binds 1 heme b (iron(II)-protoporphyrin IX) group per dimer.</text>
</comment>
<comment type="subunit">
    <text evidence="1">Homodimer or homotetramer.</text>
</comment>
<comment type="PTM">
    <text evidence="1">Formation of the three residue Trp-Tyr-Met cross-link is important for the catalase, but not the peroxidase activity of the enzyme.</text>
</comment>
<comment type="similarity">
    <text evidence="1">Belongs to the peroxidase family. Peroxidase/catalase subfamily.</text>
</comment>
<reference key="1">
    <citation type="journal article" date="2004" name="Proc. Natl. Acad. Sci. U.S.A.">
        <title>The complete genomic sequence of Nocardia farcinica IFM 10152.</title>
        <authorList>
            <person name="Ishikawa J."/>
            <person name="Yamashita A."/>
            <person name="Mikami Y."/>
            <person name="Hoshino Y."/>
            <person name="Kurita H."/>
            <person name="Hotta K."/>
            <person name="Shiba T."/>
            <person name="Hattori M."/>
        </authorList>
    </citation>
    <scope>NUCLEOTIDE SEQUENCE [LARGE SCALE GENOMIC DNA]</scope>
    <source>
        <strain>IFM 10152</strain>
    </source>
</reference>
<keyword id="KW-0349">Heme</keyword>
<keyword id="KW-0376">Hydrogen peroxide</keyword>
<keyword id="KW-0408">Iron</keyword>
<keyword id="KW-0479">Metal-binding</keyword>
<keyword id="KW-0560">Oxidoreductase</keyword>
<keyword id="KW-0575">Peroxidase</keyword>
<keyword id="KW-1185">Reference proteome</keyword>
<organism>
    <name type="scientific">Nocardia farcinica (strain IFM 10152)</name>
    <dbReference type="NCBI Taxonomy" id="247156"/>
    <lineage>
        <taxon>Bacteria</taxon>
        <taxon>Bacillati</taxon>
        <taxon>Actinomycetota</taxon>
        <taxon>Actinomycetes</taxon>
        <taxon>Mycobacteriales</taxon>
        <taxon>Nocardiaceae</taxon>
        <taxon>Nocardia</taxon>
    </lineage>
</organism>
<protein>
    <recommendedName>
        <fullName evidence="1">Catalase-peroxidase</fullName>
        <shortName evidence="1">CP</shortName>
        <ecNumber evidence="1">1.11.1.21</ecNumber>
    </recommendedName>
    <alternativeName>
        <fullName evidence="1">Peroxidase/catalase</fullName>
    </alternativeName>
</protein>
<dbReference type="EC" id="1.11.1.21" evidence="1"/>
<dbReference type="EMBL" id="AP006618">
    <property type="protein sequence ID" value="BAD57797.1"/>
    <property type="molecule type" value="Genomic_DNA"/>
</dbReference>
<dbReference type="RefSeq" id="WP_011209482.1">
    <property type="nucleotide sequence ID" value="NC_006361.1"/>
</dbReference>
<dbReference type="SMR" id="Q5YVJ4"/>
<dbReference type="STRING" id="247156.NFA_29500"/>
<dbReference type="PeroxiBase" id="2380">
    <property type="entry name" value="NfaCP01_IFM10152"/>
</dbReference>
<dbReference type="GeneID" id="61133670"/>
<dbReference type="KEGG" id="nfa:NFA_29500"/>
<dbReference type="eggNOG" id="COG0376">
    <property type="taxonomic scope" value="Bacteria"/>
</dbReference>
<dbReference type="HOGENOM" id="CLU_025424_2_0_11"/>
<dbReference type="OrthoDB" id="9759743at2"/>
<dbReference type="Proteomes" id="UP000006820">
    <property type="component" value="Chromosome"/>
</dbReference>
<dbReference type="GO" id="GO:0005829">
    <property type="term" value="C:cytosol"/>
    <property type="evidence" value="ECO:0007669"/>
    <property type="project" value="TreeGrafter"/>
</dbReference>
<dbReference type="GO" id="GO:0004096">
    <property type="term" value="F:catalase activity"/>
    <property type="evidence" value="ECO:0007669"/>
    <property type="project" value="UniProtKB-UniRule"/>
</dbReference>
<dbReference type="GO" id="GO:0020037">
    <property type="term" value="F:heme binding"/>
    <property type="evidence" value="ECO:0007669"/>
    <property type="project" value="InterPro"/>
</dbReference>
<dbReference type="GO" id="GO:0046872">
    <property type="term" value="F:metal ion binding"/>
    <property type="evidence" value="ECO:0007669"/>
    <property type="project" value="UniProtKB-KW"/>
</dbReference>
<dbReference type="GO" id="GO:0070301">
    <property type="term" value="P:cellular response to hydrogen peroxide"/>
    <property type="evidence" value="ECO:0007669"/>
    <property type="project" value="TreeGrafter"/>
</dbReference>
<dbReference type="GO" id="GO:0042744">
    <property type="term" value="P:hydrogen peroxide catabolic process"/>
    <property type="evidence" value="ECO:0007669"/>
    <property type="project" value="UniProtKB-KW"/>
</dbReference>
<dbReference type="CDD" id="cd00649">
    <property type="entry name" value="catalase_peroxidase_1"/>
    <property type="match status" value="1"/>
</dbReference>
<dbReference type="CDD" id="cd08200">
    <property type="entry name" value="catalase_peroxidase_2"/>
    <property type="match status" value="1"/>
</dbReference>
<dbReference type="FunFam" id="1.10.420.10:FF:000002">
    <property type="entry name" value="Catalase-peroxidase"/>
    <property type="match status" value="1"/>
</dbReference>
<dbReference type="FunFam" id="1.10.420.10:FF:000004">
    <property type="entry name" value="Catalase-peroxidase"/>
    <property type="match status" value="1"/>
</dbReference>
<dbReference type="FunFam" id="1.10.520.10:FF:000002">
    <property type="entry name" value="Catalase-peroxidase"/>
    <property type="match status" value="1"/>
</dbReference>
<dbReference type="Gene3D" id="1.10.520.10">
    <property type="match status" value="2"/>
</dbReference>
<dbReference type="Gene3D" id="1.10.420.10">
    <property type="entry name" value="Peroxidase, domain 2"/>
    <property type="match status" value="2"/>
</dbReference>
<dbReference type="HAMAP" id="MF_01961">
    <property type="entry name" value="Catal_peroxid"/>
    <property type="match status" value="1"/>
</dbReference>
<dbReference type="InterPro" id="IPR000763">
    <property type="entry name" value="Catalase_peroxidase"/>
</dbReference>
<dbReference type="InterPro" id="IPR002016">
    <property type="entry name" value="Haem_peroxidase"/>
</dbReference>
<dbReference type="InterPro" id="IPR010255">
    <property type="entry name" value="Haem_peroxidase_sf"/>
</dbReference>
<dbReference type="InterPro" id="IPR019794">
    <property type="entry name" value="Peroxidases_AS"/>
</dbReference>
<dbReference type="InterPro" id="IPR019793">
    <property type="entry name" value="Peroxidases_heam-ligand_BS"/>
</dbReference>
<dbReference type="NCBIfam" id="TIGR00198">
    <property type="entry name" value="cat_per_HPI"/>
    <property type="match status" value="1"/>
</dbReference>
<dbReference type="NCBIfam" id="NF011635">
    <property type="entry name" value="PRK15061.1"/>
    <property type="match status" value="1"/>
</dbReference>
<dbReference type="PANTHER" id="PTHR30555:SF0">
    <property type="entry name" value="CATALASE-PEROXIDASE"/>
    <property type="match status" value="1"/>
</dbReference>
<dbReference type="PANTHER" id="PTHR30555">
    <property type="entry name" value="HYDROPEROXIDASE I, BIFUNCTIONAL CATALASE-PEROXIDASE"/>
    <property type="match status" value="1"/>
</dbReference>
<dbReference type="Pfam" id="PF00141">
    <property type="entry name" value="peroxidase"/>
    <property type="match status" value="2"/>
</dbReference>
<dbReference type="PRINTS" id="PR00460">
    <property type="entry name" value="BPEROXIDASE"/>
</dbReference>
<dbReference type="PRINTS" id="PR00458">
    <property type="entry name" value="PEROXIDASE"/>
</dbReference>
<dbReference type="SUPFAM" id="SSF48113">
    <property type="entry name" value="Heme-dependent peroxidases"/>
    <property type="match status" value="2"/>
</dbReference>
<dbReference type="PROSITE" id="PS00435">
    <property type="entry name" value="PEROXIDASE_1"/>
    <property type="match status" value="1"/>
</dbReference>
<dbReference type="PROSITE" id="PS00436">
    <property type="entry name" value="PEROXIDASE_2"/>
    <property type="match status" value="1"/>
</dbReference>
<dbReference type="PROSITE" id="PS50873">
    <property type="entry name" value="PEROXIDASE_4"/>
    <property type="match status" value="1"/>
</dbReference>
<sequence length="739" mass="80210">MSVEHPPIGEANTEPAAGGCPVTGRLRHPLQGGGNHEWWPNQLNLKVLAKNPAEGNPLGDFDYKAAFNSLDLAAVKADIAEVLTTSQDWWPADFGNYGPLMIRMAWHSAGTYRSSDGRGGANTGQQRFAPLNSWPDNGNLDKARRLLWPVKKKYGQNISWADLMILAGNVALETMGFKTFGFAGGRVDVWEPEEDVYWGPEAEWLGDKRYSGERDLENPLAAVQMGLIYVNPEGPNGNPDPLAAAVDIKDTFGRMGMTVEETVALIAGGHTFGKTHGAGDAALVGAEPEAAPLEQMGLGWKSSHGTGKGADAITSGLEVVWTTKPTQWSNDFFEILFGYEWELTKSPAGANQWVAKDAQPIIPDPFDPAKKRLPTMLTTDLSLRVDPEMEVISRRFKDNPDEFADAFARAWFKLTHRDLGPVTRYLGPEVPSEVQLWQDPIPAVDHELVDAADIAALKEQILASELSISQLVKTAWAAASSFRGSDYRGGANGGRIRLQPQLGWEVNEPDELARVIAVLEGIQEQFNAAQTGNKKVSFADLVVLGGVAAVEQAARNAGVAVEVPFTPGRADTTQELTDPEGFAVLEPKADGFRNYLGKANPLPAEYLLVDKANLLTLTAPEMTVLVGGLRVLNANYQRSPLGVLTETPESLTNDFFVNLLDMGVVWEPSPADDGTYVGKDAATGAQKWTGSRVDLLFGSNSVLRSLAEVYATDDAKPKFVQDFVAAWNKVMNLDRFDLA</sequence>
<evidence type="ECO:0000255" key="1">
    <source>
        <dbReference type="HAMAP-Rule" id="MF_01961"/>
    </source>
</evidence>
<evidence type="ECO:0000256" key="2">
    <source>
        <dbReference type="SAM" id="MobiDB-lite"/>
    </source>
</evidence>
<name>KATG_NOCFA</name>
<proteinExistence type="inferred from homology"/>